<organism>
    <name type="scientific">Gallus gallus</name>
    <name type="common">Chicken</name>
    <dbReference type="NCBI Taxonomy" id="9031"/>
    <lineage>
        <taxon>Eukaryota</taxon>
        <taxon>Metazoa</taxon>
        <taxon>Chordata</taxon>
        <taxon>Craniata</taxon>
        <taxon>Vertebrata</taxon>
        <taxon>Euteleostomi</taxon>
        <taxon>Archelosauria</taxon>
        <taxon>Archosauria</taxon>
        <taxon>Dinosauria</taxon>
        <taxon>Saurischia</taxon>
        <taxon>Theropoda</taxon>
        <taxon>Coelurosauria</taxon>
        <taxon>Aves</taxon>
        <taxon>Neognathae</taxon>
        <taxon>Galloanserae</taxon>
        <taxon>Galliformes</taxon>
        <taxon>Phasianidae</taxon>
        <taxon>Phasianinae</taxon>
        <taxon>Gallus</taxon>
    </lineage>
</organism>
<dbReference type="EMBL" id="AJ720565">
    <property type="protein sequence ID" value="CAG32224.1"/>
    <property type="molecule type" value="mRNA"/>
</dbReference>
<dbReference type="RefSeq" id="NP_001026391.1">
    <property type="nucleotide sequence ID" value="NM_001031220.1"/>
</dbReference>
<dbReference type="BMRB" id="Q5ZJ69"/>
<dbReference type="SMR" id="Q5ZJ69"/>
<dbReference type="FunCoup" id="Q5ZJ69">
    <property type="interactions" value="310"/>
</dbReference>
<dbReference type="STRING" id="9031.ENSGALP00000071277"/>
<dbReference type="PaxDb" id="9031-ENSGALP00000004725"/>
<dbReference type="GeneID" id="423661"/>
<dbReference type="KEGG" id="gga:423661"/>
<dbReference type="CTD" id="84159"/>
<dbReference type="VEuPathDB" id="HostDB:geneid_423661"/>
<dbReference type="eggNOG" id="KOG2744">
    <property type="taxonomic scope" value="Eukaryota"/>
</dbReference>
<dbReference type="InParanoid" id="Q5ZJ69"/>
<dbReference type="OrthoDB" id="1938591at2759"/>
<dbReference type="PhylomeDB" id="Q5ZJ69"/>
<dbReference type="PRO" id="PR:Q5ZJ69"/>
<dbReference type="Proteomes" id="UP000000539">
    <property type="component" value="Unassembled WGS sequence"/>
</dbReference>
<dbReference type="GO" id="GO:0005634">
    <property type="term" value="C:nucleus"/>
    <property type="evidence" value="ECO:0000318"/>
    <property type="project" value="GO_Central"/>
</dbReference>
<dbReference type="GO" id="GO:0000976">
    <property type="term" value="F:transcription cis-regulatory region binding"/>
    <property type="evidence" value="ECO:0000250"/>
    <property type="project" value="UniProtKB"/>
</dbReference>
<dbReference type="GO" id="GO:0003713">
    <property type="term" value="F:transcription coactivator activity"/>
    <property type="evidence" value="ECO:0000250"/>
    <property type="project" value="UniProtKB"/>
</dbReference>
<dbReference type="GO" id="GO:0060612">
    <property type="term" value="P:adipose tissue development"/>
    <property type="evidence" value="ECO:0000250"/>
    <property type="project" value="UniProtKB"/>
</dbReference>
<dbReference type="GO" id="GO:0051091">
    <property type="term" value="P:positive regulation of DNA-binding transcription factor activity"/>
    <property type="evidence" value="ECO:0000250"/>
    <property type="project" value="UniProtKB"/>
</dbReference>
<dbReference type="GO" id="GO:0006357">
    <property type="term" value="P:regulation of transcription by RNA polymerase II"/>
    <property type="evidence" value="ECO:0000318"/>
    <property type="project" value="GO_Central"/>
</dbReference>
<dbReference type="CDD" id="cd16885">
    <property type="entry name" value="ARID_ARID5B"/>
    <property type="match status" value="1"/>
</dbReference>
<dbReference type="FunFam" id="1.10.150.60:FF:000004">
    <property type="entry name" value="AT-rich interactive domain-containing protein 5B"/>
    <property type="match status" value="1"/>
</dbReference>
<dbReference type="FunFam" id="2.30.30.490:FF:000038">
    <property type="entry name" value="AT-rich interactive domain-containing protein 5B"/>
    <property type="match status" value="1"/>
</dbReference>
<dbReference type="Gene3D" id="2.30.30.490">
    <property type="match status" value="1"/>
</dbReference>
<dbReference type="Gene3D" id="1.10.150.60">
    <property type="entry name" value="ARID DNA-binding domain"/>
    <property type="match status" value="1"/>
</dbReference>
<dbReference type="InterPro" id="IPR051232">
    <property type="entry name" value="ARID/SWI1_ChromRemod"/>
</dbReference>
<dbReference type="InterPro" id="IPR030408">
    <property type="entry name" value="ARID5B_ARID/BRIGHT_DNA-bd"/>
</dbReference>
<dbReference type="InterPro" id="IPR001606">
    <property type="entry name" value="ARID_dom"/>
</dbReference>
<dbReference type="InterPro" id="IPR036431">
    <property type="entry name" value="ARID_dom_sf"/>
</dbReference>
<dbReference type="InterPro" id="IPR043151">
    <property type="entry name" value="BAH_sf"/>
</dbReference>
<dbReference type="PANTHER" id="PTHR13964:SF37">
    <property type="entry name" value="AT-RICH INTERACTIVE DOMAIN-CONTAINING PROTEIN 5B"/>
    <property type="match status" value="1"/>
</dbReference>
<dbReference type="PANTHER" id="PTHR13964">
    <property type="entry name" value="RBP-RELATED"/>
    <property type="match status" value="1"/>
</dbReference>
<dbReference type="Pfam" id="PF01388">
    <property type="entry name" value="ARID"/>
    <property type="match status" value="1"/>
</dbReference>
<dbReference type="SMART" id="SM01014">
    <property type="entry name" value="ARID"/>
    <property type="match status" value="1"/>
</dbReference>
<dbReference type="SMART" id="SM00501">
    <property type="entry name" value="BRIGHT"/>
    <property type="match status" value="1"/>
</dbReference>
<dbReference type="SUPFAM" id="SSF46774">
    <property type="entry name" value="ARID-like"/>
    <property type="match status" value="1"/>
</dbReference>
<dbReference type="PROSITE" id="PS51011">
    <property type="entry name" value="ARID"/>
    <property type="match status" value="1"/>
</dbReference>
<sequence>MERSALQWVGAPCGSHGPYVFYRAFRFQRRGGGRARVLSLGDFFFVRCRAEEPACIAELQLLWEERTSRQLLSSAKLYFLPEDTPQGRTSDHGEDEVIAVSEKVTVKLEDLAKWAQSDFSKWKCGFRAEPVKPMDVGKNGQKEALMRYRQSTLNSGLNFKDILKEKADLGEDDEDSNLLILSYPQYCRYRSMLKRIQDKPSSILTDQFVLALGGIAVTSKNPQIFYCRDTFDHPTLIENESICDEFAPNLKGRPRKKKPCPQRRDSLNGIKDSNNNSESKAVAKVKCEAKSALPKPKSNNSNCKKGSSEDKSKIAVGEECRADEQAFLVALYKYMKERKTPIERIPYLGFKQINLWTMFQAAQKLGGYETITARRQWKHIYDELGGNPGSTSAATCTRRHYERLILPYERFIKGEEDKPLPPVKPRKQDNSSQEGEAKTKVSGTKRIKNENQKSKKEKDNAQKPQDASEVSSEQEKDQESADQKNFTEHPTAGETKQPNQGPPPLLPEAARPLPMEKIDVTENSSSSEKAKEEVPHLSSFPSLSMPPDEDTVLDATVTKRLHSSADTQEDTKPERRIHKAFTESLENEPPEMPFSTFPVQLPTQSDMEDDKLPEMADYIANCTVKVDQLGNEDIHNALKQTPKVLVVQNFDMFKEKELPGSMSDDSTFGYTPLLYSKGNPGIMSPLAKKKLLSQVSGAALSCSYPYGSPPPLISKKKLNSRDELSSSLSQGPHVPNSDPIAINRPSVIQHVQSFKSKEERKSINDVFKHDMLSKVDPQRCDFSQHCLSSLAESYVPKTDIQDCKDKMTEKRALQHSRVPTFLADFYSSPHLHNLFRHTEHHLNNEQTSKYLPRDMFRESENISTFTQHKHQEKLNLNYHPSLHQQEKKATVEASSDDQPTDLSLPKSIHKQTAKAPGPGLSHSSMAQQEGKGVSLFQAASSQAVSLDCNPKACRVSPMAMTAPKKHSELLHRSGKQQAQRLENLRKMEGMVHPIISRRMSPQNIGAARPLKRGLEELDKVISEKKVRAVSPLHLPKETSVKEKVPDAEGEGSKSLHGLHSGSVLESHKFPLSAPIFPGLYPGTLCTGLNNRLPPGYSHPLQYLKNQTVLSPLMQPLALHSLMVQRQFLTSPANSQQLYRHLATATPVGSSYGDLLHNSIYPLAAINPQAAFPPSQLSSVHPSTKL</sequence>
<evidence type="ECO:0000250" key="1"/>
<evidence type="ECO:0000255" key="2">
    <source>
        <dbReference type="PROSITE-ProRule" id="PRU00355"/>
    </source>
</evidence>
<evidence type="ECO:0000256" key="3">
    <source>
        <dbReference type="SAM" id="MobiDB-lite"/>
    </source>
</evidence>
<evidence type="ECO:0000305" key="4"/>
<gene>
    <name type="primary">ARID5B</name>
    <name type="ORF">RCJMB04_20e24</name>
</gene>
<keyword id="KW-0010">Activator</keyword>
<keyword id="KW-0238">DNA-binding</keyword>
<keyword id="KW-0539">Nucleus</keyword>
<keyword id="KW-1185">Reference proteome</keyword>
<keyword id="KW-0804">Transcription</keyword>
<keyword id="KW-0805">Transcription regulation</keyword>
<proteinExistence type="evidence at transcript level"/>
<protein>
    <recommendedName>
        <fullName>AT-rich interactive domain-containing protein 5B</fullName>
        <shortName>ARID domain-containing protein 5B</shortName>
    </recommendedName>
</protein>
<reference key="1">
    <citation type="journal article" date="2005" name="Genome Biol.">
        <title>Full-length cDNAs from chicken bursal lymphocytes to facilitate gene function analysis.</title>
        <authorList>
            <person name="Caldwell R.B."/>
            <person name="Kierzek A.M."/>
            <person name="Arakawa H."/>
            <person name="Bezzubov Y."/>
            <person name="Zaim J."/>
            <person name="Fiedler P."/>
            <person name="Kutter S."/>
            <person name="Blagodatski A."/>
            <person name="Kostovska D."/>
            <person name="Koter M."/>
            <person name="Plachy J."/>
            <person name="Carninci P."/>
            <person name="Hayashizaki Y."/>
            <person name="Buerstedde J.-M."/>
        </authorList>
    </citation>
    <scope>NUCLEOTIDE SEQUENCE [LARGE SCALE MRNA]</scope>
    <source>
        <strain>CB</strain>
        <tissue>Bursa of Fabricius</tissue>
    </source>
</reference>
<accession>Q5ZJ69</accession>
<name>ARI5B_CHICK</name>
<feature type="chain" id="PRO_0000288932" description="AT-rich interactive domain-containing protein 5B">
    <location>
        <begin position="1"/>
        <end position="1185"/>
    </location>
</feature>
<feature type="domain" description="ARID" evidence="2">
    <location>
        <begin position="321"/>
        <end position="413"/>
    </location>
</feature>
<feature type="region of interest" description="Disordered" evidence="3">
    <location>
        <begin position="248"/>
        <end position="281"/>
    </location>
</feature>
<feature type="region of interest" description="Disordered" evidence="3">
    <location>
        <begin position="413"/>
        <end position="550"/>
    </location>
</feature>
<feature type="region of interest" description="Disordered" evidence="3">
    <location>
        <begin position="713"/>
        <end position="742"/>
    </location>
</feature>
<feature type="region of interest" description="Disordered" evidence="3">
    <location>
        <begin position="883"/>
        <end position="932"/>
    </location>
</feature>
<feature type="region of interest" description="Disordered" evidence="3">
    <location>
        <begin position="1033"/>
        <end position="1058"/>
    </location>
</feature>
<feature type="compositionally biased region" description="Basic residues" evidence="3">
    <location>
        <begin position="252"/>
        <end position="261"/>
    </location>
</feature>
<feature type="compositionally biased region" description="Basic and acidic residues" evidence="3">
    <location>
        <begin position="447"/>
        <end position="461"/>
    </location>
</feature>
<feature type="compositionally biased region" description="Polar residues" evidence="3">
    <location>
        <begin position="462"/>
        <end position="471"/>
    </location>
</feature>
<feature type="compositionally biased region" description="Basic and acidic residues" evidence="3">
    <location>
        <begin position="473"/>
        <end position="487"/>
    </location>
</feature>
<feature type="compositionally biased region" description="Basic and acidic residues" evidence="3">
    <location>
        <begin position="1034"/>
        <end position="1053"/>
    </location>
</feature>
<comment type="function">
    <text evidence="1">Transcription coactivator that binds to the 5'-AATA[CT]-3' core sequence and plays a key role in adipogenesis and liver development. Required for adipogenesis: regulates triglyceride metabolism in adipocytes by regulating expression of adipogenic genes (By similarity).</text>
</comment>
<comment type="subcellular location">
    <subcellularLocation>
        <location evidence="2">Nucleus</location>
    </subcellularLocation>
</comment>
<comment type="domain">
    <text evidence="1">The ARID domain mediates the interaction with DNA.</text>
</comment>
<comment type="similarity">
    <text evidence="4">Belongs to the ARID5B family.</text>
</comment>